<comment type="function">
    <text evidence="2 3">Involved in mercuric ion uptake.</text>
</comment>
<comment type="activity regulation">
    <text evidence="3">Inhibited by the thiol-modifying reagent N-ethylmaleimide (NEM).</text>
</comment>
<comment type="biophysicochemical properties">
    <kinetics>
        <KM evidence="3">3 uM for Hg(2+)</KM>
    </kinetics>
</comment>
<comment type="subunit">
    <text evidence="2">Monomer.</text>
</comment>
<comment type="subcellular location">
    <subcellularLocation>
        <location evidence="2">Cell inner membrane</location>
        <topology evidence="1 2">Multi-pass membrane protein</topology>
    </subcellularLocation>
</comment>
<comment type="induction">
    <text evidence="3">Constitutively expressed.</text>
</comment>
<sequence length="144" mass="15526">MSAITRIIDKIGIVGTIVGSFSCAMCFPAAASLGAAIGLGFLSQWEGLFVQWLIPIFASVALLATLAGWFSHRQWQRTLLGSIGPVLALVGVFGLTHHFLDKDLARVIFYTGLVVMFLVSIWDMVNPANRRCATDGCETPAPRS</sequence>
<gene>
    <name evidence="4" type="primary">merC</name>
</gene>
<accession>P22905</accession>
<dbReference type="EMBL" id="D90110">
    <property type="protein sequence ID" value="BAA14138.2"/>
    <property type="molecule type" value="Genomic_DNA"/>
</dbReference>
<dbReference type="PIR" id="JS0479">
    <property type="entry name" value="JS0479"/>
</dbReference>
<dbReference type="RefSeq" id="WP_009567170.1">
    <property type="nucleotide sequence ID" value="NZ_RRZY01000046.1"/>
</dbReference>
<dbReference type="TCDB" id="1.A.72.4.2">
    <property type="family name" value="the mercuric ion pore (mer) superfamily"/>
</dbReference>
<dbReference type="GeneID" id="65281545"/>
<dbReference type="OMA" id="WEGLFIT"/>
<dbReference type="OrthoDB" id="4764601at2"/>
<dbReference type="GO" id="GO:0005886">
    <property type="term" value="C:plasma membrane"/>
    <property type="evidence" value="ECO:0007669"/>
    <property type="project" value="UniProtKB-SubCell"/>
</dbReference>
<dbReference type="GO" id="GO:0015097">
    <property type="term" value="F:mercury ion transmembrane transporter activity"/>
    <property type="evidence" value="ECO:0007669"/>
    <property type="project" value="InterPro"/>
</dbReference>
<dbReference type="GO" id="GO:0046872">
    <property type="term" value="F:metal ion binding"/>
    <property type="evidence" value="ECO:0007669"/>
    <property type="project" value="UniProtKB-KW"/>
</dbReference>
<dbReference type="InterPro" id="IPR004891">
    <property type="entry name" value="Mercury-R_MerC"/>
</dbReference>
<dbReference type="NCBIfam" id="NF010318">
    <property type="entry name" value="PRK13755.1"/>
    <property type="match status" value="1"/>
</dbReference>
<dbReference type="NCBIfam" id="NF033784">
    <property type="entry name" value="transport_merC"/>
    <property type="match status" value="1"/>
</dbReference>
<dbReference type="Pfam" id="PF03203">
    <property type="entry name" value="MerC"/>
    <property type="match status" value="1"/>
</dbReference>
<proteinExistence type="evidence at protein level"/>
<protein>
    <recommendedName>
        <fullName evidence="5">Mercuric transport protein MerC</fullName>
    </recommendedName>
    <alternativeName>
        <fullName evidence="5">Mercuric resistance protein MerC</fullName>
    </alternativeName>
</protein>
<feature type="chain" id="PRO_0000096425" description="Mercuric transport protein MerC">
    <location>
        <begin position="1"/>
        <end position="144"/>
    </location>
</feature>
<feature type="topological domain" description="Cytoplasmic" evidence="2">
    <location>
        <begin position="1"/>
        <end position="21"/>
    </location>
</feature>
<feature type="transmembrane region" description="Helical" evidence="1">
    <location>
        <begin position="22"/>
        <end position="42"/>
    </location>
</feature>
<feature type="topological domain" description="Periplasmic" evidence="2">
    <location>
        <begin position="43"/>
        <end position="46"/>
    </location>
</feature>
<feature type="transmembrane region" description="Helical" evidence="1">
    <location>
        <begin position="47"/>
        <end position="67"/>
    </location>
</feature>
<feature type="topological domain" description="Cytoplasmic" evidence="2">
    <location>
        <begin position="68"/>
        <end position="78"/>
    </location>
</feature>
<feature type="transmembrane region" description="Helical" evidence="1">
    <location>
        <begin position="79"/>
        <end position="99"/>
    </location>
</feature>
<feature type="topological domain" description="Periplasmic" evidence="2">
    <location>
        <begin position="100"/>
        <end position="103"/>
    </location>
</feature>
<feature type="transmembrane region" description="Helical" evidence="1">
    <location>
        <begin position="104"/>
        <end position="124"/>
    </location>
</feature>
<feature type="topological domain" description="Cytoplasmic" evidence="2">
    <location>
        <begin position="125"/>
        <end position="144"/>
    </location>
</feature>
<feature type="binding site" evidence="6">
    <location>
        <position position="23"/>
    </location>
    <ligand>
        <name>Hg(2+)</name>
        <dbReference type="ChEBI" id="CHEBI:16793"/>
    </ligand>
</feature>
<feature type="binding site" evidence="6">
    <location>
        <position position="26"/>
    </location>
    <ligand>
        <name>Hg(2+)</name>
        <dbReference type="ChEBI" id="CHEBI:16793"/>
    </ligand>
</feature>
<feature type="mutagenesis site" description="Loss of activity." evidence="2">
    <original>C</original>
    <variation>S</variation>
    <location>
        <position position="23"/>
    </location>
</feature>
<feature type="mutagenesis site" description="Loss of activity." evidence="2">
    <original>C</original>
    <variation>S</variation>
    <location>
        <position position="26"/>
    </location>
</feature>
<feature type="mutagenesis site" description="Slight decrease in activity." evidence="2">
    <original>H</original>
    <variation>E</variation>
    <location>
        <position position="72"/>
    </location>
</feature>
<feature type="mutagenesis site" description="No change in activity." evidence="2">
    <original>H</original>
    <variation>E</variation>
    <location>
        <position position="97"/>
    </location>
</feature>
<feature type="mutagenesis site" description="No change in activity." evidence="2">
    <original>H</original>
    <variation>E</variation>
    <location>
        <position position="98"/>
    </location>
</feature>
<feature type="mutagenesis site" description="No change in activity." evidence="2">
    <original>C</original>
    <variation>S</variation>
    <location>
        <position position="132"/>
    </location>
</feature>
<feature type="mutagenesis site" description="Slight decrease in activity." evidence="2">
    <original>C</original>
    <variation>S</variation>
    <location>
        <position position="137"/>
    </location>
</feature>
<evidence type="ECO:0000255" key="1"/>
<evidence type="ECO:0000269" key="2">
    <source>
    </source>
</evidence>
<evidence type="ECO:0000269" key="3">
    <source>
    </source>
</evidence>
<evidence type="ECO:0000303" key="4">
    <source>
    </source>
</evidence>
<evidence type="ECO:0000305" key="5"/>
<evidence type="ECO:0000305" key="6">
    <source>
    </source>
</evidence>
<organism>
    <name type="scientific">Acidithiobacillus ferrooxidans</name>
    <name type="common">Thiobacillus ferrooxidans</name>
    <dbReference type="NCBI Taxonomy" id="920"/>
    <lineage>
        <taxon>Bacteria</taxon>
        <taxon>Pseudomonadati</taxon>
        <taxon>Pseudomonadota</taxon>
        <taxon>Acidithiobacillia</taxon>
        <taxon>Acidithiobacillales</taxon>
        <taxon>Acidithiobacillaceae</taxon>
        <taxon>Acidithiobacillus</taxon>
    </lineage>
</organism>
<name>MERC_ACIFR</name>
<keyword id="KW-0997">Cell inner membrane</keyword>
<keyword id="KW-1003">Cell membrane</keyword>
<keyword id="KW-0472">Membrane</keyword>
<keyword id="KW-0475">Mercuric resistance</keyword>
<keyword id="KW-0476">Mercury</keyword>
<keyword id="KW-0479">Metal-binding</keyword>
<keyword id="KW-0812">Transmembrane</keyword>
<keyword id="KW-1133">Transmembrane helix</keyword>
<keyword id="KW-0813">Transport</keyword>
<reference key="1">
    <citation type="journal article" date="1990" name="Gene">
        <title>Thiobacillus ferrooxidans mer operon: sequence analysis of the promoter and adjacent genes.</title>
        <authorList>
            <person name="Inoue C."/>
            <person name="Sugawara K."/>
            <person name="Kusano T."/>
        </authorList>
    </citation>
    <scope>NUCLEOTIDE SEQUENCE [GENOMIC DNA]</scope>
    <source>
        <strain>E-15</strain>
    </source>
</reference>
<reference key="2">
    <citation type="submission" date="2002-08" db="EMBL/GenBank/DDBJ databases">
        <authorList>
            <person name="Inoue C."/>
            <person name="Sugawara K."/>
            <person name="Kusano T."/>
        </authorList>
    </citation>
    <scope>SEQUENCE REVISION TO 130</scope>
</reference>
<reference key="3">
    <citation type="journal article" date="1990" name="J. Bacteriol.">
        <title>Constitutive synthesis of a transport function encoded by the Thiobacillus ferrooxidans merC gene cloned in Escherichia coli.</title>
        <authorList>
            <person name="Kusano T."/>
            <person name="Ji G.Y."/>
            <person name="Inoue C."/>
            <person name="Silver S."/>
        </authorList>
    </citation>
    <scope>FUNCTION</scope>
    <scope>ACTIVITY REGULATION</scope>
    <scope>BIOPHYSICOCHEMICAL PROPERTIES</scope>
    <scope>INDUCTION</scope>
</reference>
<reference key="4">
    <citation type="journal article" date="2005" name="Biosci. Biotechnol. Biochem.">
        <title>Functional dissection of a mercuric ion transporter, MerC, from Acidithiobacillus ferrooxidans.</title>
        <authorList>
            <person name="Sasaki Y."/>
            <person name="Minakawa T."/>
            <person name="Miyazaki A."/>
            <person name="Silver S."/>
            <person name="Kusano T."/>
        </authorList>
    </citation>
    <scope>FUNCTION</scope>
    <scope>SUBUNIT</scope>
    <scope>SUBCELLULAR LOCATION</scope>
    <scope>TOPOLOGY</scope>
    <scope>MUTAGENESIS OF CYS-23; CYS-26; HIS-72; HIS-97; HIS-98; CYS-132 AND CYS-137</scope>
</reference>